<proteinExistence type="inferred from homology"/>
<evidence type="ECO:0000255" key="1">
    <source>
        <dbReference type="HAMAP-Rule" id="MF_00034"/>
    </source>
</evidence>
<feature type="chain" id="PRO_1000090548" description="Crossover junction endodeoxyribonuclease RuvC">
    <location>
        <begin position="1"/>
        <end position="158"/>
    </location>
</feature>
<feature type="active site" evidence="1">
    <location>
        <position position="7"/>
    </location>
</feature>
<feature type="active site" evidence="1">
    <location>
        <position position="67"/>
    </location>
</feature>
<feature type="active site" evidence="1">
    <location>
        <position position="139"/>
    </location>
</feature>
<feature type="binding site" evidence="1">
    <location>
        <position position="7"/>
    </location>
    <ligand>
        <name>Mg(2+)</name>
        <dbReference type="ChEBI" id="CHEBI:18420"/>
        <label>1</label>
    </ligand>
</feature>
<feature type="binding site" evidence="1">
    <location>
        <position position="67"/>
    </location>
    <ligand>
        <name>Mg(2+)</name>
        <dbReference type="ChEBI" id="CHEBI:18420"/>
        <label>2</label>
    </ligand>
</feature>
<feature type="binding site" evidence="1">
    <location>
        <position position="139"/>
    </location>
    <ligand>
        <name>Mg(2+)</name>
        <dbReference type="ChEBI" id="CHEBI:18420"/>
        <label>1</label>
    </ligand>
</feature>
<comment type="function">
    <text evidence="1">The RuvA-RuvB-RuvC complex processes Holliday junction (HJ) DNA during genetic recombination and DNA repair. Endonuclease that resolves HJ intermediates. Cleaves cruciform DNA by making single-stranded nicks across the HJ at symmetrical positions within the homologous arms, yielding a 5'-phosphate and a 3'-hydroxyl group; requires a central core of homology in the junction. The consensus cleavage sequence is 5'-(A/T)TT(C/G)-3'. Cleavage occurs on the 3'-side of the TT dinucleotide at the point of strand exchange. HJ branch migration catalyzed by RuvA-RuvB allows RuvC to scan DNA until it finds its consensus sequence, where it cleaves and resolves the cruciform DNA.</text>
</comment>
<comment type="catalytic activity">
    <reaction evidence="1">
        <text>Endonucleolytic cleavage at a junction such as a reciprocal single-stranded crossover between two homologous DNA duplexes (Holliday junction).</text>
        <dbReference type="EC" id="3.1.21.10"/>
    </reaction>
</comment>
<comment type="cofactor">
    <cofactor evidence="1">
        <name>Mg(2+)</name>
        <dbReference type="ChEBI" id="CHEBI:18420"/>
    </cofactor>
    <text evidence="1">Binds 2 Mg(2+) ion per subunit.</text>
</comment>
<comment type="subunit">
    <text evidence="1">Homodimer which binds Holliday junction (HJ) DNA. The HJ becomes 2-fold symmetrical on binding to RuvC with unstacked arms; it has a different conformation from HJ DNA in complex with RuvA. In the full resolvosome a probable DNA-RuvA(4)-RuvB(12)-RuvC(2) complex forms which resolves the HJ.</text>
</comment>
<comment type="subcellular location">
    <subcellularLocation>
        <location evidence="1">Cytoplasm</location>
    </subcellularLocation>
</comment>
<comment type="similarity">
    <text evidence="1">Belongs to the RuvC family.</text>
</comment>
<keyword id="KW-0963">Cytoplasm</keyword>
<keyword id="KW-0227">DNA damage</keyword>
<keyword id="KW-0233">DNA recombination</keyword>
<keyword id="KW-0234">DNA repair</keyword>
<keyword id="KW-0238">DNA-binding</keyword>
<keyword id="KW-0255">Endonuclease</keyword>
<keyword id="KW-0378">Hydrolase</keyword>
<keyword id="KW-0460">Magnesium</keyword>
<keyword id="KW-0479">Metal-binding</keyword>
<keyword id="KW-0540">Nuclease</keyword>
<keyword id="KW-1185">Reference proteome</keyword>
<protein>
    <recommendedName>
        <fullName evidence="1">Crossover junction endodeoxyribonuclease RuvC</fullName>
        <ecNumber evidence="1">3.1.21.10</ecNumber>
    </recommendedName>
    <alternativeName>
        <fullName evidence="1">Holliday junction nuclease RuvC</fullName>
    </alternativeName>
    <alternativeName>
        <fullName evidence="1">Holliday junction resolvase RuvC</fullName>
    </alternativeName>
</protein>
<reference key="1">
    <citation type="journal article" date="2007" name="PLoS Genet.">
        <title>Patterns and implications of gene gain and loss in the evolution of Prochlorococcus.</title>
        <authorList>
            <person name="Kettler G.C."/>
            <person name="Martiny A.C."/>
            <person name="Huang K."/>
            <person name="Zucker J."/>
            <person name="Coleman M.L."/>
            <person name="Rodrigue S."/>
            <person name="Chen F."/>
            <person name="Lapidus A."/>
            <person name="Ferriera S."/>
            <person name="Johnson J."/>
            <person name="Steglich C."/>
            <person name="Church G.M."/>
            <person name="Richardson P."/>
            <person name="Chisholm S.W."/>
        </authorList>
    </citation>
    <scope>NUCLEOTIDE SEQUENCE [LARGE SCALE GENOMIC DNA]</scope>
    <source>
        <strain>MIT 9211</strain>
    </source>
</reference>
<dbReference type="EC" id="3.1.21.10" evidence="1"/>
<dbReference type="EMBL" id="CP000878">
    <property type="protein sequence ID" value="ABX09068.1"/>
    <property type="molecule type" value="Genomic_DNA"/>
</dbReference>
<dbReference type="RefSeq" id="WP_012195689.1">
    <property type="nucleotide sequence ID" value="NC_009976.1"/>
</dbReference>
<dbReference type="SMR" id="A9BB56"/>
<dbReference type="STRING" id="93059.P9211_11371"/>
<dbReference type="KEGG" id="pmj:P9211_11371"/>
<dbReference type="eggNOG" id="COG0817">
    <property type="taxonomic scope" value="Bacteria"/>
</dbReference>
<dbReference type="HOGENOM" id="CLU_091257_3_1_3"/>
<dbReference type="OrthoDB" id="9805499at2"/>
<dbReference type="Proteomes" id="UP000000788">
    <property type="component" value="Chromosome"/>
</dbReference>
<dbReference type="GO" id="GO:0005737">
    <property type="term" value="C:cytoplasm"/>
    <property type="evidence" value="ECO:0007669"/>
    <property type="project" value="UniProtKB-SubCell"/>
</dbReference>
<dbReference type="GO" id="GO:0048476">
    <property type="term" value="C:Holliday junction resolvase complex"/>
    <property type="evidence" value="ECO:0007669"/>
    <property type="project" value="UniProtKB-UniRule"/>
</dbReference>
<dbReference type="GO" id="GO:0008821">
    <property type="term" value="F:crossover junction DNA endonuclease activity"/>
    <property type="evidence" value="ECO:0007669"/>
    <property type="project" value="UniProtKB-UniRule"/>
</dbReference>
<dbReference type="GO" id="GO:0003677">
    <property type="term" value="F:DNA binding"/>
    <property type="evidence" value="ECO:0007669"/>
    <property type="project" value="UniProtKB-KW"/>
</dbReference>
<dbReference type="GO" id="GO:0000287">
    <property type="term" value="F:magnesium ion binding"/>
    <property type="evidence" value="ECO:0007669"/>
    <property type="project" value="UniProtKB-UniRule"/>
</dbReference>
<dbReference type="GO" id="GO:0006310">
    <property type="term" value="P:DNA recombination"/>
    <property type="evidence" value="ECO:0007669"/>
    <property type="project" value="UniProtKB-UniRule"/>
</dbReference>
<dbReference type="GO" id="GO:0006281">
    <property type="term" value="P:DNA repair"/>
    <property type="evidence" value="ECO:0007669"/>
    <property type="project" value="UniProtKB-UniRule"/>
</dbReference>
<dbReference type="CDD" id="cd16962">
    <property type="entry name" value="RuvC"/>
    <property type="match status" value="1"/>
</dbReference>
<dbReference type="FunFam" id="3.30.420.10:FF:000002">
    <property type="entry name" value="Crossover junction endodeoxyribonuclease RuvC"/>
    <property type="match status" value="1"/>
</dbReference>
<dbReference type="Gene3D" id="3.30.420.10">
    <property type="entry name" value="Ribonuclease H-like superfamily/Ribonuclease H"/>
    <property type="match status" value="1"/>
</dbReference>
<dbReference type="HAMAP" id="MF_00034">
    <property type="entry name" value="RuvC"/>
    <property type="match status" value="1"/>
</dbReference>
<dbReference type="InterPro" id="IPR012337">
    <property type="entry name" value="RNaseH-like_sf"/>
</dbReference>
<dbReference type="InterPro" id="IPR036397">
    <property type="entry name" value="RNaseH_sf"/>
</dbReference>
<dbReference type="InterPro" id="IPR020563">
    <property type="entry name" value="X-over_junc_endoDNase_Mg_BS"/>
</dbReference>
<dbReference type="InterPro" id="IPR002176">
    <property type="entry name" value="X-over_junc_endoDNase_RuvC"/>
</dbReference>
<dbReference type="NCBIfam" id="NF000711">
    <property type="entry name" value="PRK00039.2-1"/>
    <property type="match status" value="1"/>
</dbReference>
<dbReference type="NCBIfam" id="TIGR00228">
    <property type="entry name" value="ruvC"/>
    <property type="match status" value="1"/>
</dbReference>
<dbReference type="PANTHER" id="PTHR30194">
    <property type="entry name" value="CROSSOVER JUNCTION ENDODEOXYRIBONUCLEASE RUVC"/>
    <property type="match status" value="1"/>
</dbReference>
<dbReference type="PANTHER" id="PTHR30194:SF3">
    <property type="entry name" value="CROSSOVER JUNCTION ENDODEOXYRIBONUCLEASE RUVC"/>
    <property type="match status" value="1"/>
</dbReference>
<dbReference type="Pfam" id="PF02075">
    <property type="entry name" value="RuvC"/>
    <property type="match status" value="1"/>
</dbReference>
<dbReference type="PRINTS" id="PR00696">
    <property type="entry name" value="RSOLVASERUVC"/>
</dbReference>
<dbReference type="SUPFAM" id="SSF53098">
    <property type="entry name" value="Ribonuclease H-like"/>
    <property type="match status" value="1"/>
</dbReference>
<dbReference type="PROSITE" id="PS01321">
    <property type="entry name" value="RUVC"/>
    <property type="match status" value="1"/>
</dbReference>
<sequence>MIILGIDPGLARVGYGLIDCNMTQKKMLDCGIIKTSQDHNDGERMVEITRDLRYLINKWKPQIASVEKFFFYRSSTTIKVVQARGVVIMTLARFRVPILEFPPMQIKLAVTGSGKANKDEVSMAVIRELDLSKPPRPDDASDALAIALTAYYQQRIVK</sequence>
<organism>
    <name type="scientific">Prochlorococcus marinus (strain MIT 9211)</name>
    <dbReference type="NCBI Taxonomy" id="93059"/>
    <lineage>
        <taxon>Bacteria</taxon>
        <taxon>Bacillati</taxon>
        <taxon>Cyanobacteriota</taxon>
        <taxon>Cyanophyceae</taxon>
        <taxon>Synechococcales</taxon>
        <taxon>Prochlorococcaceae</taxon>
        <taxon>Prochlorococcus</taxon>
    </lineage>
</organism>
<gene>
    <name evidence="1" type="primary">ruvC</name>
    <name type="ordered locus">P9211_11371</name>
</gene>
<name>RUVC_PROM4</name>
<accession>A9BB56</accession>